<feature type="chain" id="PRO_1000068952" description="Cytidine deaminase">
    <location>
        <begin position="1"/>
        <end position="294"/>
    </location>
</feature>
<feature type="domain" description="CMP/dCMP-type deaminase 1" evidence="2">
    <location>
        <begin position="48"/>
        <end position="168"/>
    </location>
</feature>
<feature type="domain" description="CMP/dCMP-type deaminase 2" evidence="2">
    <location>
        <begin position="186"/>
        <end position="294"/>
    </location>
</feature>
<feature type="active site" description="Proton donor" evidence="1">
    <location>
        <position position="104"/>
    </location>
</feature>
<feature type="binding site" evidence="1">
    <location>
        <begin position="89"/>
        <end position="91"/>
    </location>
    <ligand>
        <name>substrate</name>
    </ligand>
</feature>
<feature type="binding site" evidence="1">
    <location>
        <position position="102"/>
    </location>
    <ligand>
        <name>Zn(2+)</name>
        <dbReference type="ChEBI" id="CHEBI:29105"/>
        <note>catalytic</note>
    </ligand>
</feature>
<feature type="binding site" evidence="1">
    <location>
        <position position="129"/>
    </location>
    <ligand>
        <name>Zn(2+)</name>
        <dbReference type="ChEBI" id="CHEBI:29105"/>
        <note>catalytic</note>
    </ligand>
</feature>
<feature type="binding site" evidence="1">
    <location>
        <position position="132"/>
    </location>
    <ligand>
        <name>Zn(2+)</name>
        <dbReference type="ChEBI" id="CHEBI:29105"/>
        <note>catalytic</note>
    </ligand>
</feature>
<accession>Q1R9T0</accession>
<name>CDD_ECOUT</name>
<proteinExistence type="inferred from homology"/>
<dbReference type="EC" id="3.5.4.5" evidence="1"/>
<dbReference type="EMBL" id="CP000243">
    <property type="protein sequence ID" value="ABE07884.1"/>
    <property type="molecule type" value="Genomic_DNA"/>
</dbReference>
<dbReference type="RefSeq" id="WP_000553553.1">
    <property type="nucleotide sequence ID" value="NZ_CP064825.1"/>
</dbReference>
<dbReference type="SMR" id="Q1R9T0"/>
<dbReference type="KEGG" id="eci:UTI89_C2416"/>
<dbReference type="HOGENOM" id="CLU_052424_0_0_6"/>
<dbReference type="Proteomes" id="UP000001952">
    <property type="component" value="Chromosome"/>
</dbReference>
<dbReference type="GO" id="GO:0005829">
    <property type="term" value="C:cytosol"/>
    <property type="evidence" value="ECO:0007669"/>
    <property type="project" value="TreeGrafter"/>
</dbReference>
<dbReference type="GO" id="GO:0004126">
    <property type="term" value="F:cytidine deaminase activity"/>
    <property type="evidence" value="ECO:0007669"/>
    <property type="project" value="UniProtKB-UniRule"/>
</dbReference>
<dbReference type="GO" id="GO:0042802">
    <property type="term" value="F:identical protein binding"/>
    <property type="evidence" value="ECO:0007669"/>
    <property type="project" value="UniProtKB-ARBA"/>
</dbReference>
<dbReference type="GO" id="GO:0008270">
    <property type="term" value="F:zinc ion binding"/>
    <property type="evidence" value="ECO:0007669"/>
    <property type="project" value="UniProtKB-UniRule"/>
</dbReference>
<dbReference type="GO" id="GO:0009972">
    <property type="term" value="P:cytidine deamination"/>
    <property type="evidence" value="ECO:0007669"/>
    <property type="project" value="InterPro"/>
</dbReference>
<dbReference type="CDD" id="cd01283">
    <property type="entry name" value="cytidine_deaminase"/>
    <property type="match status" value="2"/>
</dbReference>
<dbReference type="FunFam" id="3.40.140.10:FF:000006">
    <property type="entry name" value="Cytidine deaminase"/>
    <property type="match status" value="1"/>
</dbReference>
<dbReference type="FunFam" id="3.40.140.10:FF:000007">
    <property type="entry name" value="Cytidine deaminase"/>
    <property type="match status" value="1"/>
</dbReference>
<dbReference type="Gene3D" id="3.40.140.10">
    <property type="entry name" value="Cytidine Deaminase, domain 2"/>
    <property type="match status" value="2"/>
</dbReference>
<dbReference type="HAMAP" id="MF_01558">
    <property type="entry name" value="Cyt_deam"/>
    <property type="match status" value="1"/>
</dbReference>
<dbReference type="InterPro" id="IPR016192">
    <property type="entry name" value="APOBEC/CMP_deaminase_Zn-bd"/>
</dbReference>
<dbReference type="InterPro" id="IPR002125">
    <property type="entry name" value="CMP_dCMP_dom"/>
</dbReference>
<dbReference type="InterPro" id="IPR013171">
    <property type="entry name" value="Cyd/dCyd_deaminase_Zn-bd"/>
</dbReference>
<dbReference type="InterPro" id="IPR050202">
    <property type="entry name" value="Cyt/Deoxycyt_deaminase"/>
</dbReference>
<dbReference type="InterPro" id="IPR006263">
    <property type="entry name" value="Cyt_deam_dimer"/>
</dbReference>
<dbReference type="InterPro" id="IPR016193">
    <property type="entry name" value="Cytidine_deaminase-like"/>
</dbReference>
<dbReference type="InterPro" id="IPR020797">
    <property type="entry name" value="Cytidine_deaminase_bacteria"/>
</dbReference>
<dbReference type="NCBIfam" id="TIGR01355">
    <property type="entry name" value="cyt_deam_dimer"/>
    <property type="match status" value="1"/>
</dbReference>
<dbReference type="NCBIfam" id="NF006537">
    <property type="entry name" value="PRK09027.1"/>
    <property type="match status" value="1"/>
</dbReference>
<dbReference type="PANTHER" id="PTHR11644">
    <property type="entry name" value="CYTIDINE DEAMINASE"/>
    <property type="match status" value="1"/>
</dbReference>
<dbReference type="PANTHER" id="PTHR11644:SF2">
    <property type="entry name" value="CYTIDINE DEAMINASE"/>
    <property type="match status" value="1"/>
</dbReference>
<dbReference type="Pfam" id="PF00383">
    <property type="entry name" value="dCMP_cyt_deam_1"/>
    <property type="match status" value="1"/>
</dbReference>
<dbReference type="Pfam" id="PF08211">
    <property type="entry name" value="dCMP_cyt_deam_2"/>
    <property type="match status" value="1"/>
</dbReference>
<dbReference type="PIRSF" id="PIRSF006334">
    <property type="entry name" value="Cdd_plus_pseudo"/>
    <property type="match status" value="1"/>
</dbReference>
<dbReference type="SUPFAM" id="SSF53927">
    <property type="entry name" value="Cytidine deaminase-like"/>
    <property type="match status" value="2"/>
</dbReference>
<dbReference type="PROSITE" id="PS00903">
    <property type="entry name" value="CYT_DCMP_DEAMINASES_1"/>
    <property type="match status" value="1"/>
</dbReference>
<dbReference type="PROSITE" id="PS51747">
    <property type="entry name" value="CYT_DCMP_DEAMINASES_2"/>
    <property type="match status" value="2"/>
</dbReference>
<keyword id="KW-0378">Hydrolase</keyword>
<keyword id="KW-0479">Metal-binding</keyword>
<keyword id="KW-0862">Zinc</keyword>
<comment type="function">
    <text evidence="1">This enzyme scavenges exogenous and endogenous cytidine and 2'-deoxycytidine for UMP synthesis.</text>
</comment>
<comment type="catalytic activity">
    <reaction evidence="1">
        <text>cytidine + H2O + H(+) = uridine + NH4(+)</text>
        <dbReference type="Rhea" id="RHEA:16069"/>
        <dbReference type="ChEBI" id="CHEBI:15377"/>
        <dbReference type="ChEBI" id="CHEBI:15378"/>
        <dbReference type="ChEBI" id="CHEBI:16704"/>
        <dbReference type="ChEBI" id="CHEBI:17562"/>
        <dbReference type="ChEBI" id="CHEBI:28938"/>
        <dbReference type="EC" id="3.5.4.5"/>
    </reaction>
</comment>
<comment type="catalytic activity">
    <reaction evidence="1">
        <text>2'-deoxycytidine + H2O + H(+) = 2'-deoxyuridine + NH4(+)</text>
        <dbReference type="Rhea" id="RHEA:13433"/>
        <dbReference type="ChEBI" id="CHEBI:15377"/>
        <dbReference type="ChEBI" id="CHEBI:15378"/>
        <dbReference type="ChEBI" id="CHEBI:15698"/>
        <dbReference type="ChEBI" id="CHEBI:16450"/>
        <dbReference type="ChEBI" id="CHEBI:28938"/>
        <dbReference type="EC" id="3.5.4.5"/>
    </reaction>
</comment>
<comment type="cofactor">
    <cofactor evidence="1">
        <name>Zn(2+)</name>
        <dbReference type="ChEBI" id="CHEBI:29105"/>
    </cofactor>
    <text evidence="1">Binds 1 zinc ion.</text>
</comment>
<comment type="subunit">
    <text evidence="1">Homodimer.</text>
</comment>
<comment type="similarity">
    <text evidence="1">Belongs to the cytidine and deoxycytidylate deaminase family.</text>
</comment>
<reference key="1">
    <citation type="journal article" date="2006" name="Proc. Natl. Acad. Sci. U.S.A.">
        <title>Identification of genes subject to positive selection in uropathogenic strains of Escherichia coli: a comparative genomics approach.</title>
        <authorList>
            <person name="Chen S.L."/>
            <person name="Hung C.-S."/>
            <person name="Xu J."/>
            <person name="Reigstad C.S."/>
            <person name="Magrini V."/>
            <person name="Sabo A."/>
            <person name="Blasiar D."/>
            <person name="Bieri T."/>
            <person name="Meyer R.R."/>
            <person name="Ozersky P."/>
            <person name="Armstrong J.R."/>
            <person name="Fulton R.S."/>
            <person name="Latreille J.P."/>
            <person name="Spieth J."/>
            <person name="Hooton T.M."/>
            <person name="Mardis E.R."/>
            <person name="Hultgren S.J."/>
            <person name="Gordon J.I."/>
        </authorList>
    </citation>
    <scope>NUCLEOTIDE SEQUENCE [LARGE SCALE GENOMIC DNA]</scope>
    <source>
        <strain>UTI89 / UPEC</strain>
    </source>
</reference>
<sequence>MHPRFQTAFAQLADNLQSALEPILADKYFPALLTGEQVSSLKSATGLDEDALAFALLPLAAACARTPLSNFNVGAIARGVSGTWYFGANMEFIGATMQQTVHAEQSAISHAWLSGEKALAAITVNYTPCGHCRQFMNELNSGLDLRIHLPGREAHALRDYLPDAFGPKDLEIKTLLMDEQDHGYALTGDALSQAAIAAANRSHMPYSKSPSGVALECKDGRIFSGSYAENAAFNPTLPPLQGALILLNLKGYDYPDIQRAVLAEKADAPLIQWDATSATLKALGCHNIDRVLLA</sequence>
<gene>
    <name evidence="1" type="primary">cdd</name>
    <name type="ordered locus">UTI89_C2416</name>
</gene>
<organism>
    <name type="scientific">Escherichia coli (strain UTI89 / UPEC)</name>
    <dbReference type="NCBI Taxonomy" id="364106"/>
    <lineage>
        <taxon>Bacteria</taxon>
        <taxon>Pseudomonadati</taxon>
        <taxon>Pseudomonadota</taxon>
        <taxon>Gammaproteobacteria</taxon>
        <taxon>Enterobacterales</taxon>
        <taxon>Enterobacteriaceae</taxon>
        <taxon>Escherichia</taxon>
    </lineage>
</organism>
<evidence type="ECO:0000255" key="1">
    <source>
        <dbReference type="HAMAP-Rule" id="MF_01558"/>
    </source>
</evidence>
<evidence type="ECO:0000255" key="2">
    <source>
        <dbReference type="PROSITE-ProRule" id="PRU01083"/>
    </source>
</evidence>
<protein>
    <recommendedName>
        <fullName evidence="1">Cytidine deaminase</fullName>
        <ecNumber evidence="1">3.5.4.5</ecNumber>
    </recommendedName>
    <alternativeName>
        <fullName evidence="1">Cytidine aminohydrolase</fullName>
        <shortName evidence="1">CDA</shortName>
    </alternativeName>
</protein>